<keyword id="KW-0256">Endoplasmic reticulum</keyword>
<keyword id="KW-0325">Glycoprotein</keyword>
<keyword id="KW-0415">Karyogamy</keyword>
<keyword id="KW-0472">Membrane</keyword>
<keyword id="KW-0539">Nucleus</keyword>
<keyword id="KW-1185">Reference proteome</keyword>
<keyword id="KW-0732">Signal</keyword>
<keyword id="KW-0812">Transmembrane</keyword>
<keyword id="KW-1133">Transmembrane helix</keyword>
<evidence type="ECO:0000250" key="1"/>
<evidence type="ECO:0000255" key="2"/>
<evidence type="ECO:0000305" key="3"/>
<protein>
    <recommendedName>
        <fullName>Nuclear fusion protein KAR5</fullName>
    </recommendedName>
    <alternativeName>
        <fullName>Karyogamy protein 5</fullName>
    </alternativeName>
</protein>
<organism>
    <name type="scientific">Debaryomyces hansenii (strain ATCC 36239 / CBS 767 / BCRC 21394 / JCM 1990 / NBRC 0083 / IGC 2968)</name>
    <name type="common">Yeast</name>
    <name type="synonym">Torulaspora hansenii</name>
    <dbReference type="NCBI Taxonomy" id="284592"/>
    <lineage>
        <taxon>Eukaryota</taxon>
        <taxon>Fungi</taxon>
        <taxon>Dikarya</taxon>
        <taxon>Ascomycota</taxon>
        <taxon>Saccharomycotina</taxon>
        <taxon>Pichiomycetes</taxon>
        <taxon>Debaryomycetaceae</taxon>
        <taxon>Debaryomyces</taxon>
    </lineage>
</organism>
<feature type="signal peptide" evidence="2">
    <location>
        <begin position="1"/>
        <end position="20"/>
    </location>
</feature>
<feature type="chain" id="PRO_0000308772" description="Nuclear fusion protein KAR5">
    <location>
        <begin position="21"/>
        <end position="574"/>
    </location>
</feature>
<feature type="topological domain" description="Lumenal" evidence="1">
    <location>
        <begin position="21"/>
        <end position="483"/>
    </location>
</feature>
<feature type="transmembrane region" description="Helical" evidence="2">
    <location>
        <begin position="484"/>
        <end position="504"/>
    </location>
</feature>
<feature type="topological domain" description="Cytoplasmic" evidence="1">
    <location>
        <begin position="505"/>
        <end position="540"/>
    </location>
</feature>
<feature type="transmembrane region" description="Helical" evidence="2">
    <location>
        <begin position="541"/>
        <end position="561"/>
    </location>
</feature>
<feature type="topological domain" description="Lumenal" evidence="1">
    <location>
        <begin position="562"/>
        <end position="574"/>
    </location>
</feature>
<feature type="glycosylation site" description="N-linked (GlcNAc...) asparagine" evidence="2">
    <location>
        <position position="178"/>
    </location>
</feature>
<feature type="glycosylation site" description="N-linked (GlcNAc...) asparagine" evidence="2">
    <location>
        <position position="191"/>
    </location>
</feature>
<feature type="glycosylation site" description="N-linked (GlcNAc...) asparagine" evidence="2">
    <location>
        <position position="305"/>
    </location>
</feature>
<feature type="glycosylation site" description="N-linked (GlcNAc...) asparagine" evidence="2">
    <location>
        <position position="333"/>
    </location>
</feature>
<feature type="glycosylation site" description="N-linked (GlcNAc...) asparagine" evidence="2">
    <location>
        <position position="438"/>
    </location>
</feature>
<reference key="1">
    <citation type="journal article" date="2004" name="Nature">
        <title>Genome evolution in yeasts.</title>
        <authorList>
            <person name="Dujon B."/>
            <person name="Sherman D."/>
            <person name="Fischer G."/>
            <person name="Durrens P."/>
            <person name="Casaregola S."/>
            <person name="Lafontaine I."/>
            <person name="de Montigny J."/>
            <person name="Marck C."/>
            <person name="Neuveglise C."/>
            <person name="Talla E."/>
            <person name="Goffard N."/>
            <person name="Frangeul L."/>
            <person name="Aigle M."/>
            <person name="Anthouard V."/>
            <person name="Babour A."/>
            <person name="Barbe V."/>
            <person name="Barnay S."/>
            <person name="Blanchin S."/>
            <person name="Beckerich J.-M."/>
            <person name="Beyne E."/>
            <person name="Bleykasten C."/>
            <person name="Boisrame A."/>
            <person name="Boyer J."/>
            <person name="Cattolico L."/>
            <person name="Confanioleri F."/>
            <person name="de Daruvar A."/>
            <person name="Despons L."/>
            <person name="Fabre E."/>
            <person name="Fairhead C."/>
            <person name="Ferry-Dumazet H."/>
            <person name="Groppi A."/>
            <person name="Hantraye F."/>
            <person name="Hennequin C."/>
            <person name="Jauniaux N."/>
            <person name="Joyet P."/>
            <person name="Kachouri R."/>
            <person name="Kerrest A."/>
            <person name="Koszul R."/>
            <person name="Lemaire M."/>
            <person name="Lesur I."/>
            <person name="Ma L."/>
            <person name="Muller H."/>
            <person name="Nicaud J.-M."/>
            <person name="Nikolski M."/>
            <person name="Oztas S."/>
            <person name="Ozier-Kalogeropoulos O."/>
            <person name="Pellenz S."/>
            <person name="Potier S."/>
            <person name="Richard G.-F."/>
            <person name="Straub M.-L."/>
            <person name="Suleau A."/>
            <person name="Swennen D."/>
            <person name="Tekaia F."/>
            <person name="Wesolowski-Louvel M."/>
            <person name="Westhof E."/>
            <person name="Wirth B."/>
            <person name="Zeniou-Meyer M."/>
            <person name="Zivanovic Y."/>
            <person name="Bolotin-Fukuhara M."/>
            <person name="Thierry A."/>
            <person name="Bouchier C."/>
            <person name="Caudron B."/>
            <person name="Scarpelli C."/>
            <person name="Gaillardin C."/>
            <person name="Weissenbach J."/>
            <person name="Wincker P."/>
            <person name="Souciet J.-L."/>
        </authorList>
    </citation>
    <scope>NUCLEOTIDE SEQUENCE [LARGE SCALE GENOMIC DNA]</scope>
    <source>
        <strain>ATCC 36239 / CBS 767 / BCRC 21394 / JCM 1990 / NBRC 0083 / IGC 2968</strain>
    </source>
</reference>
<gene>
    <name type="primary">KAR5</name>
    <name type="ordered locus">DEHA2E21208g</name>
</gene>
<sequence>MDCVNISWFLITLFAAIATSTMHDGENNNVGKMLQEPTYLQSEMIESIMSRHLESFSLTESDFEDIIFMKPRSKCVKDALKDIIPECMRLGVDSIEPGLQKKAAIQLSICEFENSKVTYPSSCYNMINDNDFDSCIFDIERAPQYWTTFSGYYREITKICYEESLPFEKEQIISLYSNITKLYSKMFQDLNDSYKDSTHIQQMMKNEFKELQRMMKVILDQNEKTSEEVKEKYEEFSEQYSSMLSTSLEISKKFSLGTENLVEDMANNIKYLDFELSRISIAIEDLDFETKLTDMKNSVLDDVRNLSDESISLLDSILTNLESLDILSQDAQNITNGISQSLKKNEVLSNNMNNALIETDTQLHEHNEVIRFEFEETISYLSQFSDQAIDNAIRDTSEEITKHVATFIDSINLRLEETTTKLEEVIYNIDDLSDKVGNASSYLIEGLNLLTSNGIMDALLLTYNNVASGLESGFGMLTTLKSDIFKIVRFITACILFAILFIWSMNRLFSQNRTKHTTLSSISPIGILNFRRIFRFLTNLALWLSVMGGTLLAVIVTNFLIQLKVYISKLSTND</sequence>
<proteinExistence type="inferred from homology"/>
<name>KAR5_DEBHA</name>
<dbReference type="EMBL" id="CR382137">
    <property type="protein sequence ID" value="CAG88499.2"/>
    <property type="molecule type" value="Genomic_DNA"/>
</dbReference>
<dbReference type="RefSeq" id="XP_460226.2">
    <property type="nucleotide sequence ID" value="XM_460226.1"/>
</dbReference>
<dbReference type="SMR" id="Q6BNJ4"/>
<dbReference type="FunCoup" id="Q6BNJ4">
    <property type="interactions" value="36"/>
</dbReference>
<dbReference type="GlyCosmos" id="Q6BNJ4">
    <property type="glycosylation" value="5 sites, No reported glycans"/>
</dbReference>
<dbReference type="GeneID" id="2902143"/>
<dbReference type="KEGG" id="dha:DEHA2E21208g"/>
<dbReference type="VEuPathDB" id="FungiDB:DEHA2E21208g"/>
<dbReference type="eggNOG" id="ENOG502QVCQ">
    <property type="taxonomic scope" value="Eukaryota"/>
</dbReference>
<dbReference type="HOGENOM" id="CLU_474887_0_0_1"/>
<dbReference type="InParanoid" id="Q6BNJ4"/>
<dbReference type="OMA" id="LSICEFQ"/>
<dbReference type="OrthoDB" id="5311848at2759"/>
<dbReference type="Proteomes" id="UP000000599">
    <property type="component" value="Chromosome E"/>
</dbReference>
<dbReference type="GO" id="GO:0005789">
    <property type="term" value="C:endoplasmic reticulum membrane"/>
    <property type="evidence" value="ECO:0007669"/>
    <property type="project" value="UniProtKB-SubCell"/>
</dbReference>
<dbReference type="GO" id="GO:0031965">
    <property type="term" value="C:nuclear membrane"/>
    <property type="evidence" value="ECO:0007669"/>
    <property type="project" value="UniProtKB-SubCell"/>
</dbReference>
<dbReference type="GO" id="GO:0000742">
    <property type="term" value="P:karyogamy involved in conjugation with cellular fusion"/>
    <property type="evidence" value="ECO:0007669"/>
    <property type="project" value="InterPro"/>
</dbReference>
<dbReference type="GO" id="GO:0048288">
    <property type="term" value="P:nuclear membrane fusion involved in karyogamy"/>
    <property type="evidence" value="ECO:0007669"/>
    <property type="project" value="InterPro"/>
</dbReference>
<dbReference type="InterPro" id="IPR007292">
    <property type="entry name" value="Nuclear_fusion_Kar5"/>
</dbReference>
<dbReference type="PANTHER" id="PTHR28012">
    <property type="entry name" value="NUCLEAR FUSION PROTEIN KAR5"/>
    <property type="match status" value="1"/>
</dbReference>
<dbReference type="PANTHER" id="PTHR28012:SF1">
    <property type="entry name" value="NUCLEAR FUSION PROTEIN KAR5"/>
    <property type="match status" value="1"/>
</dbReference>
<dbReference type="Pfam" id="PF04163">
    <property type="entry name" value="Tht1"/>
    <property type="match status" value="1"/>
</dbReference>
<accession>Q6BNJ4</accession>
<comment type="function">
    <text evidence="1">Required for nuclear membrane fusion during karyogamy.</text>
</comment>
<comment type="subcellular location">
    <subcellularLocation>
        <location evidence="1">Endoplasmic reticulum membrane</location>
        <topology evidence="1">Multi-pass membrane protein</topology>
    </subcellularLocation>
    <subcellularLocation>
        <location evidence="1">Nucleus membrane</location>
        <topology evidence="1">Multi-pass membrane protein</topology>
    </subcellularLocation>
</comment>
<comment type="similarity">
    <text evidence="3">Belongs to the KAR5 family.</text>
</comment>